<keyword id="KW-0687">Ribonucleoprotein</keyword>
<keyword id="KW-0689">Ribosomal protein</keyword>
<keyword id="KW-0694">RNA-binding</keyword>
<keyword id="KW-0699">rRNA-binding</keyword>
<protein>
    <recommendedName>
        <fullName evidence="1">Small ribosomal subunit protein uS4</fullName>
    </recommendedName>
    <alternativeName>
        <fullName evidence="2">30S ribosomal protein S4</fullName>
    </alternativeName>
</protein>
<gene>
    <name evidence="1" type="primary">rpsD</name>
    <name type="ordered locus">CLH_0265</name>
</gene>
<sequence length="206" mass="23744">MARYTGATCRLCRREGMKLFLKGDRCFTDKCAFVRRSYAPGQHGASKKKMSNYGIQLREKQKARRIYGILEGQFRTYYEKAEHMKGITGENLLKLLEMRLDNVVYRLGYGASRNEARQLVTHGHFLVNGKKVDICSYHVSMNDVITVCEKSRSSEKFKTFVENPKTLPKWLEANVDNYEGKVVAEPSREDIDVPVNETLIVELYSK</sequence>
<evidence type="ECO:0000255" key="1">
    <source>
        <dbReference type="HAMAP-Rule" id="MF_01306"/>
    </source>
</evidence>
<evidence type="ECO:0000305" key="2"/>
<proteinExistence type="inferred from homology"/>
<feature type="chain" id="PRO_1000140709" description="Small ribosomal subunit protein uS4">
    <location>
        <begin position="1"/>
        <end position="206"/>
    </location>
</feature>
<feature type="domain" description="S4 RNA-binding" evidence="1">
    <location>
        <begin position="98"/>
        <end position="163"/>
    </location>
</feature>
<organism>
    <name type="scientific">Clostridium botulinum (strain Alaska E43 / Type E3)</name>
    <dbReference type="NCBI Taxonomy" id="508767"/>
    <lineage>
        <taxon>Bacteria</taxon>
        <taxon>Bacillati</taxon>
        <taxon>Bacillota</taxon>
        <taxon>Clostridia</taxon>
        <taxon>Eubacteriales</taxon>
        <taxon>Clostridiaceae</taxon>
        <taxon>Clostridium</taxon>
    </lineage>
</organism>
<reference key="1">
    <citation type="submission" date="2008-05" db="EMBL/GenBank/DDBJ databases">
        <title>Complete genome sequence of Clostridium botulinum E3 str. Alaska E43.</title>
        <authorList>
            <person name="Brinkac L.M."/>
            <person name="Brown J.L."/>
            <person name="Bruce D."/>
            <person name="Detter C."/>
            <person name="Munk C."/>
            <person name="Smith L.A."/>
            <person name="Smith T.J."/>
            <person name="Sutton G."/>
            <person name="Brettin T.S."/>
        </authorList>
    </citation>
    <scope>NUCLEOTIDE SEQUENCE [LARGE SCALE GENOMIC DNA]</scope>
    <source>
        <strain>Alaska E43 / Type E3</strain>
    </source>
</reference>
<dbReference type="EMBL" id="CP001078">
    <property type="protein sequence ID" value="ACD53923.1"/>
    <property type="molecule type" value="Genomic_DNA"/>
</dbReference>
<dbReference type="RefSeq" id="WP_003369052.1">
    <property type="nucleotide sequence ID" value="NC_010723.1"/>
</dbReference>
<dbReference type="SMR" id="B2UYD8"/>
<dbReference type="KEGG" id="cbt:CLH_0265"/>
<dbReference type="HOGENOM" id="CLU_092403_0_2_9"/>
<dbReference type="GO" id="GO:0015935">
    <property type="term" value="C:small ribosomal subunit"/>
    <property type="evidence" value="ECO:0007669"/>
    <property type="project" value="InterPro"/>
</dbReference>
<dbReference type="GO" id="GO:0019843">
    <property type="term" value="F:rRNA binding"/>
    <property type="evidence" value="ECO:0007669"/>
    <property type="project" value="UniProtKB-UniRule"/>
</dbReference>
<dbReference type="GO" id="GO:0003735">
    <property type="term" value="F:structural constituent of ribosome"/>
    <property type="evidence" value="ECO:0007669"/>
    <property type="project" value="InterPro"/>
</dbReference>
<dbReference type="GO" id="GO:0042274">
    <property type="term" value="P:ribosomal small subunit biogenesis"/>
    <property type="evidence" value="ECO:0007669"/>
    <property type="project" value="TreeGrafter"/>
</dbReference>
<dbReference type="GO" id="GO:0006412">
    <property type="term" value="P:translation"/>
    <property type="evidence" value="ECO:0007669"/>
    <property type="project" value="UniProtKB-UniRule"/>
</dbReference>
<dbReference type="CDD" id="cd00165">
    <property type="entry name" value="S4"/>
    <property type="match status" value="1"/>
</dbReference>
<dbReference type="FunFam" id="1.10.1050.10:FF:000001">
    <property type="entry name" value="30S ribosomal protein S4"/>
    <property type="match status" value="1"/>
</dbReference>
<dbReference type="FunFam" id="3.10.290.10:FF:000001">
    <property type="entry name" value="30S ribosomal protein S4"/>
    <property type="match status" value="1"/>
</dbReference>
<dbReference type="Gene3D" id="1.10.1050.10">
    <property type="entry name" value="Ribosomal Protein S4 Delta 41, Chain A, domain 1"/>
    <property type="match status" value="1"/>
</dbReference>
<dbReference type="Gene3D" id="3.10.290.10">
    <property type="entry name" value="RNA-binding S4 domain"/>
    <property type="match status" value="1"/>
</dbReference>
<dbReference type="HAMAP" id="MF_01306_B">
    <property type="entry name" value="Ribosomal_uS4_B"/>
    <property type="match status" value="1"/>
</dbReference>
<dbReference type="InterPro" id="IPR022801">
    <property type="entry name" value="Ribosomal_uS4"/>
</dbReference>
<dbReference type="InterPro" id="IPR005709">
    <property type="entry name" value="Ribosomal_uS4_bac-type"/>
</dbReference>
<dbReference type="InterPro" id="IPR018079">
    <property type="entry name" value="Ribosomal_uS4_CS"/>
</dbReference>
<dbReference type="InterPro" id="IPR001912">
    <property type="entry name" value="Ribosomal_uS4_N"/>
</dbReference>
<dbReference type="InterPro" id="IPR002942">
    <property type="entry name" value="S4_RNA-bd"/>
</dbReference>
<dbReference type="InterPro" id="IPR036986">
    <property type="entry name" value="S4_RNA-bd_sf"/>
</dbReference>
<dbReference type="NCBIfam" id="NF003717">
    <property type="entry name" value="PRK05327.1"/>
    <property type="match status" value="1"/>
</dbReference>
<dbReference type="NCBIfam" id="TIGR01017">
    <property type="entry name" value="rpsD_bact"/>
    <property type="match status" value="1"/>
</dbReference>
<dbReference type="PANTHER" id="PTHR11831">
    <property type="entry name" value="30S 40S RIBOSOMAL PROTEIN"/>
    <property type="match status" value="1"/>
</dbReference>
<dbReference type="PANTHER" id="PTHR11831:SF4">
    <property type="entry name" value="SMALL RIBOSOMAL SUBUNIT PROTEIN US4M"/>
    <property type="match status" value="1"/>
</dbReference>
<dbReference type="Pfam" id="PF00163">
    <property type="entry name" value="Ribosomal_S4"/>
    <property type="match status" value="1"/>
</dbReference>
<dbReference type="Pfam" id="PF01479">
    <property type="entry name" value="S4"/>
    <property type="match status" value="1"/>
</dbReference>
<dbReference type="SMART" id="SM01390">
    <property type="entry name" value="Ribosomal_S4"/>
    <property type="match status" value="1"/>
</dbReference>
<dbReference type="SMART" id="SM00363">
    <property type="entry name" value="S4"/>
    <property type="match status" value="1"/>
</dbReference>
<dbReference type="SUPFAM" id="SSF55174">
    <property type="entry name" value="Alpha-L RNA-binding motif"/>
    <property type="match status" value="1"/>
</dbReference>
<dbReference type="PROSITE" id="PS00632">
    <property type="entry name" value="RIBOSOMAL_S4"/>
    <property type="match status" value="1"/>
</dbReference>
<dbReference type="PROSITE" id="PS50889">
    <property type="entry name" value="S4"/>
    <property type="match status" value="1"/>
</dbReference>
<accession>B2UYD8</accession>
<comment type="function">
    <text evidence="1">One of the primary rRNA binding proteins, it binds directly to 16S rRNA where it nucleates assembly of the body of the 30S subunit.</text>
</comment>
<comment type="function">
    <text evidence="1">With S5 and S12 plays an important role in translational accuracy.</text>
</comment>
<comment type="subunit">
    <text evidence="1">Part of the 30S ribosomal subunit. Contacts protein S5. The interaction surface between S4 and S5 is involved in control of translational fidelity.</text>
</comment>
<comment type="similarity">
    <text evidence="1">Belongs to the universal ribosomal protein uS4 family.</text>
</comment>
<name>RS4_CLOBA</name>